<comment type="function">
    <text evidence="4">BTD-1, BTD-3, BTD-4 and BTD-7 have antimicrobial activity against the Gram-negative bacterium E.coli ML35, the Gram-positive bacterium S.aureus 502a, and the fungus C.albicans 16820. BTD-3 is more effective against E.coli than BTD-1, BTD-4 and BTD-7.</text>
</comment>
<comment type="subunit">
    <text evidence="4">BTD-1 is a cyclic heterodimer composed of subunits A and B; disulfide-linked. BTD-3 is a cyclic homodimer composed of two subunits A; disulfide-linked. BTD-4 is a cyclic heterodimer composed of subunits A and C; disulfide-linked. BTD-7 is a cyclic heterodimer composed of subunits A and D; disulfide-linked.</text>
</comment>
<comment type="PTM">
    <text evidence="4">Forms a cyclic peptide with subunit B (BTD-1), subunit A (BTD-3), subunit C (BTD-4), or subunit D (BTD-7). An additional intersubunit disulfide bond is formed.</text>
</comment>
<comment type="mass spectrometry">
    <text>BTD-1, heterodimer, cyclized.</text>
</comment>
<comment type="mass spectrometry">
    <text>BTD-3, homodimer, cyclized.</text>
</comment>
<comment type="mass spectrometry">
    <text>BTD-4, heterodimer, cyclized.</text>
</comment>
<comment type="mass spectrometry">
    <text>BTD-7, heterodimer, cyclized.</text>
</comment>
<comment type="similarity">
    <text evidence="2">Belongs to the alpha-defensin family. Theta subfamily.</text>
</comment>
<protein>
    <recommendedName>
        <fullName>Theta defensin subunit A</fullName>
        <shortName evidence="5">BTD-a</shortName>
    </recommendedName>
    <alternativeName>
        <fullName>BTD-1 subunit 1</fullName>
    </alternativeName>
    <alternativeName>
        <fullName>BTD-3</fullName>
    </alternativeName>
    <alternativeName>
        <fullName>BTD-4 subunit 1</fullName>
    </alternativeName>
    <alternativeName>
        <fullName>BTD-7 subunit 1</fullName>
    </alternativeName>
</protein>
<accession>B6ULW4</accession>
<accession>P86031</accession>
<name>BTDA_PAPAN</name>
<dbReference type="EMBL" id="FJ030939">
    <property type="protein sequence ID" value="ACJ12913.1"/>
    <property type="molecule type" value="mRNA"/>
</dbReference>
<dbReference type="RefSeq" id="NP_001135411.1">
    <property type="nucleotide sequence ID" value="NM_001141939.1"/>
</dbReference>
<dbReference type="RefSeq" id="XP_031525159.1">
    <property type="nucleotide sequence ID" value="XM_031669299.1"/>
</dbReference>
<dbReference type="STRING" id="9555.ENSPANP00000032247"/>
<dbReference type="Ensembl" id="ENSPANT00000068787.1">
    <property type="protein sequence ID" value="ENSPANP00000060929.1"/>
    <property type="gene ID" value="ENSPANG00000049195.1"/>
</dbReference>
<dbReference type="GeneID" id="100196940"/>
<dbReference type="KEGG" id="panu:100196940"/>
<dbReference type="CTD" id="100196940"/>
<dbReference type="eggNOG" id="ENOG502TEA8">
    <property type="taxonomic scope" value="Eukaryota"/>
</dbReference>
<dbReference type="GeneTree" id="ENSGT00940000153268"/>
<dbReference type="HOGENOM" id="CLU_160803_2_0_1"/>
<dbReference type="OMA" id="CICTRGI"/>
<dbReference type="Proteomes" id="UP000028761">
    <property type="component" value="Chromosome 8"/>
</dbReference>
<dbReference type="Bgee" id="ENSPANG00000033107">
    <property type="expression patterns" value="Expressed in bone marrow and 14 other cell types or tissues"/>
</dbReference>
<dbReference type="GO" id="GO:0031012">
    <property type="term" value="C:extracellular matrix"/>
    <property type="evidence" value="ECO:0007669"/>
    <property type="project" value="TreeGrafter"/>
</dbReference>
<dbReference type="GO" id="GO:0005615">
    <property type="term" value="C:extracellular space"/>
    <property type="evidence" value="ECO:0007669"/>
    <property type="project" value="InterPro"/>
</dbReference>
<dbReference type="GO" id="GO:0019731">
    <property type="term" value="P:antibacterial humoral response"/>
    <property type="evidence" value="ECO:0007669"/>
    <property type="project" value="TreeGrafter"/>
</dbReference>
<dbReference type="GO" id="GO:0061844">
    <property type="term" value="P:antimicrobial humoral immune response mediated by antimicrobial peptide"/>
    <property type="evidence" value="ECO:0007669"/>
    <property type="project" value="TreeGrafter"/>
</dbReference>
<dbReference type="GO" id="GO:0071222">
    <property type="term" value="P:cellular response to lipopolysaccharide"/>
    <property type="evidence" value="ECO:0007669"/>
    <property type="project" value="TreeGrafter"/>
</dbReference>
<dbReference type="GO" id="GO:0050832">
    <property type="term" value="P:defense response to fungus"/>
    <property type="evidence" value="ECO:0007669"/>
    <property type="project" value="UniProtKB-KW"/>
</dbReference>
<dbReference type="GO" id="GO:0050829">
    <property type="term" value="P:defense response to Gram-negative bacterium"/>
    <property type="evidence" value="ECO:0007669"/>
    <property type="project" value="TreeGrafter"/>
</dbReference>
<dbReference type="GO" id="GO:0050830">
    <property type="term" value="P:defense response to Gram-positive bacterium"/>
    <property type="evidence" value="ECO:0007669"/>
    <property type="project" value="TreeGrafter"/>
</dbReference>
<dbReference type="GO" id="GO:0051673">
    <property type="term" value="P:disruption of plasma membrane integrity in another organism"/>
    <property type="evidence" value="ECO:0007669"/>
    <property type="project" value="TreeGrafter"/>
</dbReference>
<dbReference type="GO" id="GO:0002227">
    <property type="term" value="P:innate immune response in mucosa"/>
    <property type="evidence" value="ECO:0007669"/>
    <property type="project" value="TreeGrafter"/>
</dbReference>
<dbReference type="GO" id="GO:0031640">
    <property type="term" value="P:killing of cells of another organism"/>
    <property type="evidence" value="ECO:0007669"/>
    <property type="project" value="UniProtKB-KW"/>
</dbReference>
<dbReference type="InterPro" id="IPR016327">
    <property type="entry name" value="Alpha-defensin"/>
</dbReference>
<dbReference type="InterPro" id="IPR002366">
    <property type="entry name" value="Alpha-defensin_N"/>
</dbReference>
<dbReference type="PANTHER" id="PTHR11876">
    <property type="entry name" value="ALPHA-DEFENSIN 1"/>
    <property type="match status" value="1"/>
</dbReference>
<dbReference type="PANTHER" id="PTHR11876:SF34">
    <property type="entry name" value="DEMIDEFENSIN-3"/>
    <property type="match status" value="1"/>
</dbReference>
<dbReference type="Pfam" id="PF00879">
    <property type="entry name" value="Defensin_propep"/>
    <property type="match status" value="1"/>
</dbReference>
<dbReference type="PIRSF" id="PIRSF001875">
    <property type="entry name" value="Alpha-defensin"/>
    <property type="match status" value="1"/>
</dbReference>
<dbReference type="SMART" id="SM01418">
    <property type="entry name" value="Defensin_propep"/>
    <property type="match status" value="1"/>
</dbReference>
<gene>
    <name type="primary">BTDA</name>
</gene>
<sequence>MRTFALLTAMLLLVALHAQAEARQARADEAAAQQQPGADDQGMAHSFTWPENAALPLSESAKGLRCVCTRGFCRLL</sequence>
<organism>
    <name type="scientific">Papio anubis</name>
    <name type="common">Olive baboon</name>
    <dbReference type="NCBI Taxonomy" id="9555"/>
    <lineage>
        <taxon>Eukaryota</taxon>
        <taxon>Metazoa</taxon>
        <taxon>Chordata</taxon>
        <taxon>Craniata</taxon>
        <taxon>Vertebrata</taxon>
        <taxon>Euteleostomi</taxon>
        <taxon>Mammalia</taxon>
        <taxon>Eutheria</taxon>
        <taxon>Euarchontoglires</taxon>
        <taxon>Primates</taxon>
        <taxon>Haplorrhini</taxon>
        <taxon>Catarrhini</taxon>
        <taxon>Cercopithecidae</taxon>
        <taxon>Cercopithecinae</taxon>
        <taxon>Papio</taxon>
    </lineage>
</organism>
<keyword id="KW-0044">Antibiotic</keyword>
<keyword id="KW-0929">Antimicrobial</keyword>
<keyword id="KW-0211">Defensin</keyword>
<keyword id="KW-0903">Direct protein sequencing</keyword>
<keyword id="KW-1015">Disulfide bond</keyword>
<keyword id="KW-0295">Fungicide</keyword>
<keyword id="KW-1185">Reference proteome</keyword>
<keyword id="KW-0732">Signal</keyword>
<evidence type="ECO:0000250" key="1">
    <source>
        <dbReference type="UniProtKB" id="P82270"/>
    </source>
</evidence>
<evidence type="ECO:0000255" key="2"/>
<evidence type="ECO:0000256" key="3">
    <source>
        <dbReference type="SAM" id="MobiDB-lite"/>
    </source>
</evidence>
<evidence type="ECO:0000269" key="4">
    <source>
    </source>
</evidence>
<evidence type="ECO:0000303" key="5">
    <source>
    </source>
</evidence>
<evidence type="ECO:0000305" key="6"/>
<evidence type="ECO:0000312" key="7">
    <source>
        <dbReference type="EMBL" id="ACJ12913.1"/>
    </source>
</evidence>
<reference evidence="6 7" key="1">
    <citation type="journal article" date="2008" name="Infect. Immun.">
        <title>Isolation, synthesis, and antimicrobial activities of naturally occurring theta-defensin isoforms from baboon leukocytes.</title>
        <authorList>
            <person name="Garcia A.E."/>
            <person name="Oesapay G."/>
            <person name="Tran P.A."/>
            <person name="Yuan J."/>
            <person name="Selsted M.E."/>
        </authorList>
    </citation>
    <scope>NUCLEOTIDE SEQUENCE [MRNA]</scope>
    <scope>PROTEIN SEQUENCE OF 65-73</scope>
    <scope>IDENTIFICATION OF BTD-1; BTD-3; BTD-4 AND BTD-7</scope>
    <scope>SYNTHESIS OF BTD-1; BTD-3; BTD-4 AND BTD-7</scope>
    <scope>FUNCTION</scope>
    <scope>SUBUNIT</scope>
    <scope>MASS SPECTROMETRY</scope>
    <source>
        <tissue evidence="4">Bone marrow</tissue>
        <tissue evidence="4">Leukocyte</tissue>
    </source>
</reference>
<feature type="signal peptide" evidence="2">
    <location>
        <begin position="1"/>
        <end position="22"/>
    </location>
</feature>
<feature type="propeptide" id="PRO_0000364007" evidence="4">
    <location>
        <begin position="23"/>
        <end position="64"/>
    </location>
</feature>
<feature type="peptide" id="PRO_0000364008" description="Theta defensin subunit A">
    <location>
        <begin position="65"/>
        <end position="73"/>
    </location>
</feature>
<feature type="propeptide" id="PRO_0000364009" evidence="4">
    <location>
        <begin position="74"/>
        <end position="76"/>
    </location>
</feature>
<feature type="region of interest" description="Disordered" evidence="3">
    <location>
        <begin position="25"/>
        <end position="45"/>
    </location>
</feature>
<feature type="compositionally biased region" description="Low complexity" evidence="3">
    <location>
        <begin position="30"/>
        <end position="44"/>
    </location>
</feature>
<feature type="disulfide bond" description="Interchain (with C-66 in subunit A); in form BTD-3" evidence="1">
    <location>
        <position position="66"/>
    </location>
</feature>
<feature type="disulfide bond" description="Interchain (with C-66 in subunit B); in form BTD-1" evidence="1">
    <location>
        <position position="66"/>
    </location>
</feature>
<feature type="disulfide bond" description="Interchain (with C-66 in subunit C); in form BTD-4" evidence="1">
    <location>
        <position position="66"/>
    </location>
</feature>
<feature type="disulfide bond" description="Interchain (with C-66 in subunit D); in form BTD-7" evidence="1">
    <location>
        <position position="66"/>
    </location>
</feature>
<feature type="disulfide bond" evidence="1">
    <location>
        <begin position="68"/>
        <end position="73"/>
    </location>
</feature>
<feature type="cross-link" description="Cyclopeptide (Arg-Cys) (interchain with C-73 in subunit A); in form BTD-3">
    <location>
        <position position="65"/>
    </location>
</feature>
<feature type="cross-link" description="Cyclopeptide (Arg-Cys) (interchain with C-73 in subunit B); in form BTD-1">
    <location>
        <position position="65"/>
    </location>
</feature>
<feature type="cross-link" description="Cyclopeptide (Arg-Cys) (interchain with C-73 in subunit C); in form BTD-4">
    <location>
        <position position="65"/>
    </location>
</feature>
<feature type="cross-link" description="Cyclopeptide (Arg-Cys) (interchain with C-73 in subunit D); in form BTD-7">
    <location>
        <position position="65"/>
    </location>
</feature>
<feature type="cross-link" description="Cyclopeptide (Cys-Arg) (interchain with R-65 in subunit A); in form BTD-3">
    <location>
        <position position="73"/>
    </location>
</feature>
<feature type="cross-link" description="Cyclopeptide (Cys-Arg) (interchain with R-65 in subunit B); in form BTD-1">
    <location>
        <position position="73"/>
    </location>
</feature>
<feature type="cross-link" description="Cyclopeptide (Cys-Arg) (interchain with R-65 in subunit C); in form BTD-4">
    <location>
        <position position="73"/>
    </location>
</feature>
<feature type="cross-link" description="Cyclopeptide (Cys-Arg) (interchain with R-65 in subunit D); in form BTD-7">
    <location>
        <position position="73"/>
    </location>
</feature>
<proteinExistence type="evidence at protein level"/>